<comment type="subcellular location">
    <subcellularLocation>
        <location evidence="3">Membrane</location>
        <topology evidence="3">Multi-pass membrane protein</topology>
    </subcellularLocation>
</comment>
<comment type="similarity">
    <text evidence="3">Belongs to the TMEM74 family.</text>
</comment>
<name>TM74B_HUMAN</name>
<accession>Q9NUR3</accession>
<accession>D3DVW5</accession>
<dbReference type="EMBL" id="AK002052">
    <property type="protein sequence ID" value="BAA92058.1"/>
    <property type="molecule type" value="mRNA"/>
</dbReference>
<dbReference type="EMBL" id="AL031665">
    <property type="status" value="NOT_ANNOTATED_CDS"/>
    <property type="molecule type" value="Genomic_DNA"/>
</dbReference>
<dbReference type="EMBL" id="CH471133">
    <property type="protein sequence ID" value="EAX10647.1"/>
    <property type="molecule type" value="Genomic_DNA"/>
</dbReference>
<dbReference type="EMBL" id="CH471133">
    <property type="protein sequence ID" value="EAX10648.1"/>
    <property type="molecule type" value="Genomic_DNA"/>
</dbReference>
<dbReference type="CCDS" id="CCDS13011.1"/>
<dbReference type="RefSeq" id="NP_001291677.1">
    <property type="nucleotide sequence ID" value="NM_001304748.2"/>
</dbReference>
<dbReference type="RefSeq" id="NP_001291678.1">
    <property type="nucleotide sequence ID" value="NM_001304749.1"/>
</dbReference>
<dbReference type="RefSeq" id="NP_001374259.1">
    <property type="nucleotide sequence ID" value="NM_001387330.1"/>
</dbReference>
<dbReference type="RefSeq" id="NP_001374260.1">
    <property type="nucleotide sequence ID" value="NM_001387331.1"/>
</dbReference>
<dbReference type="RefSeq" id="NP_001374261.1">
    <property type="nucleotide sequence ID" value="NM_001387332.1"/>
</dbReference>
<dbReference type="RefSeq" id="NP_001374262.1">
    <property type="nucleotide sequence ID" value="NM_001387333.1"/>
</dbReference>
<dbReference type="RefSeq" id="NP_001374263.1">
    <property type="nucleotide sequence ID" value="NM_001387334.1"/>
</dbReference>
<dbReference type="RefSeq" id="NP_060824.1">
    <property type="nucleotide sequence ID" value="NM_018354.3"/>
</dbReference>
<dbReference type="RefSeq" id="XP_011527584.1">
    <property type="nucleotide sequence ID" value="XM_011529282.2"/>
</dbReference>
<dbReference type="RefSeq" id="XP_011527585.1">
    <property type="nucleotide sequence ID" value="XM_011529283.2"/>
</dbReference>
<dbReference type="RefSeq" id="XP_011527586.1">
    <property type="nucleotide sequence ID" value="XM_011529284.2"/>
</dbReference>
<dbReference type="RefSeq" id="XP_016883413.1">
    <property type="nucleotide sequence ID" value="XM_017027924.2"/>
</dbReference>
<dbReference type="RefSeq" id="XP_047296213.1">
    <property type="nucleotide sequence ID" value="XM_047440257.1"/>
</dbReference>
<dbReference type="RefSeq" id="XP_054179596.1">
    <property type="nucleotide sequence ID" value="XM_054323621.1"/>
</dbReference>
<dbReference type="RefSeq" id="XP_054179597.1">
    <property type="nucleotide sequence ID" value="XM_054323622.1"/>
</dbReference>
<dbReference type="RefSeq" id="XP_054179598.1">
    <property type="nucleotide sequence ID" value="XM_054323623.1"/>
</dbReference>
<dbReference type="SMR" id="Q9NUR3"/>
<dbReference type="BioGRID" id="120602">
    <property type="interactions" value="1"/>
</dbReference>
<dbReference type="FunCoup" id="Q9NUR3">
    <property type="interactions" value="13"/>
</dbReference>
<dbReference type="IntAct" id="Q9NUR3">
    <property type="interactions" value="1"/>
</dbReference>
<dbReference type="STRING" id="9606.ENSP00000371318"/>
<dbReference type="iPTMnet" id="Q9NUR3"/>
<dbReference type="PhosphoSitePlus" id="Q9NUR3"/>
<dbReference type="BioMuta" id="TMEM74B"/>
<dbReference type="DMDM" id="27734260"/>
<dbReference type="jPOST" id="Q9NUR3"/>
<dbReference type="MassIVE" id="Q9NUR3"/>
<dbReference type="PaxDb" id="9606-ENSP00000371318"/>
<dbReference type="PeptideAtlas" id="Q9NUR3"/>
<dbReference type="ProteomicsDB" id="82715"/>
<dbReference type="Antibodypedia" id="48589">
    <property type="antibodies" value="14 antibodies from 10 providers"/>
</dbReference>
<dbReference type="DNASU" id="55321"/>
<dbReference type="Ensembl" id="ENST00000381894.3">
    <property type="protein sequence ID" value="ENSP00000371318.3"/>
    <property type="gene ID" value="ENSG00000125895.6"/>
</dbReference>
<dbReference type="Ensembl" id="ENST00000429036.2">
    <property type="protein sequence ID" value="ENSP00000400552.2"/>
    <property type="gene ID" value="ENSG00000125895.6"/>
</dbReference>
<dbReference type="GeneID" id="55321"/>
<dbReference type="KEGG" id="hsa:55321"/>
<dbReference type="MANE-Select" id="ENST00000429036.2">
    <property type="protein sequence ID" value="ENSP00000400552.2"/>
    <property type="RefSeq nucleotide sequence ID" value="NM_001304748.2"/>
    <property type="RefSeq protein sequence ID" value="NP_001291677.1"/>
</dbReference>
<dbReference type="UCSC" id="uc002weq.2">
    <property type="organism name" value="human"/>
</dbReference>
<dbReference type="AGR" id="HGNC:15893"/>
<dbReference type="CTD" id="55321"/>
<dbReference type="DisGeNET" id="55321"/>
<dbReference type="GeneCards" id="TMEM74B"/>
<dbReference type="HGNC" id="HGNC:15893">
    <property type="gene designation" value="TMEM74B"/>
</dbReference>
<dbReference type="HPA" id="ENSG00000125895">
    <property type="expression patterns" value="Tissue enhanced (brain, lung)"/>
</dbReference>
<dbReference type="neXtProt" id="NX_Q9NUR3"/>
<dbReference type="OpenTargets" id="ENSG00000125895"/>
<dbReference type="PharmGKB" id="PA25759"/>
<dbReference type="VEuPathDB" id="HostDB:ENSG00000125895"/>
<dbReference type="eggNOG" id="ENOG502RXT5">
    <property type="taxonomic scope" value="Eukaryota"/>
</dbReference>
<dbReference type="GeneTree" id="ENSGT00530000063880"/>
<dbReference type="HOGENOM" id="CLU_1098206_0_0_1"/>
<dbReference type="InParanoid" id="Q9NUR3"/>
<dbReference type="OMA" id="HETRFQN"/>
<dbReference type="OrthoDB" id="6096234at2759"/>
<dbReference type="PAN-GO" id="Q9NUR3">
    <property type="GO annotations" value="0 GO annotations based on evolutionary models"/>
</dbReference>
<dbReference type="PhylomeDB" id="Q9NUR3"/>
<dbReference type="TreeFam" id="TF335735"/>
<dbReference type="PathwayCommons" id="Q9NUR3"/>
<dbReference type="SignaLink" id="Q9NUR3"/>
<dbReference type="BioGRID-ORCS" id="55321">
    <property type="hits" value="13 hits in 1152 CRISPR screens"/>
</dbReference>
<dbReference type="GenomeRNAi" id="55321"/>
<dbReference type="Pharos" id="Q9NUR3">
    <property type="development level" value="Tdark"/>
</dbReference>
<dbReference type="PRO" id="PR:Q9NUR3"/>
<dbReference type="Proteomes" id="UP000005640">
    <property type="component" value="Chromosome 20"/>
</dbReference>
<dbReference type="RNAct" id="Q9NUR3">
    <property type="molecule type" value="protein"/>
</dbReference>
<dbReference type="Bgee" id="ENSG00000125895">
    <property type="expression patterns" value="Expressed in right uterine tube and 116 other cell types or tissues"/>
</dbReference>
<dbReference type="ExpressionAtlas" id="Q9NUR3">
    <property type="expression patterns" value="baseline and differential"/>
</dbReference>
<dbReference type="GO" id="GO:0016020">
    <property type="term" value="C:membrane"/>
    <property type="evidence" value="ECO:0007669"/>
    <property type="project" value="UniProtKB-SubCell"/>
</dbReference>
<dbReference type="InterPro" id="IPR029695">
    <property type="entry name" value="TMEM74-like"/>
</dbReference>
<dbReference type="PANTHER" id="PTHR16125">
    <property type="entry name" value="TRANSMEMBRANE PROTEIN 74"/>
    <property type="match status" value="1"/>
</dbReference>
<dbReference type="PANTHER" id="PTHR16125:SF4">
    <property type="entry name" value="TRANSMEMBRANE PROTEIN 74B"/>
    <property type="match status" value="1"/>
</dbReference>
<dbReference type="Pfam" id="PF14927">
    <property type="entry name" value="Neurensin"/>
    <property type="match status" value="1"/>
</dbReference>
<gene>
    <name type="primary">TMEM74B</name>
    <name type="synonym">C20orf46</name>
</gene>
<sequence length="256" mass="27551">MPPAQGYEFAAAKGPRDELGPSFPMASPPGLELKTLSNGPQAPRRSAPLGPVAPTREGVENACFSSEEHETHFQNPGNTRLGSSPSPPGGVSSLPRSQRDDLSLHSEEGPALEPVSRPVDYGFVSALVFLVSGILLVVTAYAIPREARVNPDTVTAREMERLEMYYARLGSHLDRCIIAGLGLLTVGGMLLSVLLMVSLCKGELYRRRTFVPGKGSRKTYGSINLRMRQLNGDGGQALVENEVVQVSETSHTLQRS</sequence>
<keyword id="KW-0472">Membrane</keyword>
<keyword id="KW-1267">Proteomics identification</keyword>
<keyword id="KW-1185">Reference proteome</keyword>
<keyword id="KW-0812">Transmembrane</keyword>
<keyword id="KW-1133">Transmembrane helix</keyword>
<organism>
    <name type="scientific">Homo sapiens</name>
    <name type="common">Human</name>
    <dbReference type="NCBI Taxonomy" id="9606"/>
    <lineage>
        <taxon>Eukaryota</taxon>
        <taxon>Metazoa</taxon>
        <taxon>Chordata</taxon>
        <taxon>Craniata</taxon>
        <taxon>Vertebrata</taxon>
        <taxon>Euteleostomi</taxon>
        <taxon>Mammalia</taxon>
        <taxon>Eutheria</taxon>
        <taxon>Euarchontoglires</taxon>
        <taxon>Primates</taxon>
        <taxon>Haplorrhini</taxon>
        <taxon>Catarrhini</taxon>
        <taxon>Hominidae</taxon>
        <taxon>Homo</taxon>
    </lineage>
</organism>
<protein>
    <recommendedName>
        <fullName>Transmembrane protein 74B</fullName>
    </recommendedName>
</protein>
<feature type="chain" id="PRO_0000079431" description="Transmembrane protein 74B">
    <location>
        <begin position="1"/>
        <end position="256"/>
    </location>
</feature>
<feature type="transmembrane region" description="Helical" evidence="1">
    <location>
        <begin position="123"/>
        <end position="143"/>
    </location>
</feature>
<feature type="transmembrane region" description="Helical" evidence="1">
    <location>
        <begin position="177"/>
        <end position="197"/>
    </location>
</feature>
<feature type="region of interest" description="Disordered" evidence="2">
    <location>
        <begin position="1"/>
        <end position="111"/>
    </location>
</feature>
<feature type="compositionally biased region" description="Low complexity" evidence="2">
    <location>
        <begin position="80"/>
        <end position="96"/>
    </location>
</feature>
<feature type="compositionally biased region" description="Basic and acidic residues" evidence="2">
    <location>
        <begin position="97"/>
        <end position="108"/>
    </location>
</feature>
<feature type="sequence variant" id="VAR_033757" description="In dbSNP:rs35393697.">
    <original>L</original>
    <variation>M</variation>
    <location>
        <position position="33"/>
    </location>
</feature>
<reference key="1">
    <citation type="journal article" date="2004" name="Nat. Genet.">
        <title>Complete sequencing and characterization of 21,243 full-length human cDNAs.</title>
        <authorList>
            <person name="Ota T."/>
            <person name="Suzuki Y."/>
            <person name="Nishikawa T."/>
            <person name="Otsuki T."/>
            <person name="Sugiyama T."/>
            <person name="Irie R."/>
            <person name="Wakamatsu A."/>
            <person name="Hayashi K."/>
            <person name="Sato H."/>
            <person name="Nagai K."/>
            <person name="Kimura K."/>
            <person name="Makita H."/>
            <person name="Sekine M."/>
            <person name="Obayashi M."/>
            <person name="Nishi T."/>
            <person name="Shibahara T."/>
            <person name="Tanaka T."/>
            <person name="Ishii S."/>
            <person name="Yamamoto J."/>
            <person name="Saito K."/>
            <person name="Kawai Y."/>
            <person name="Isono Y."/>
            <person name="Nakamura Y."/>
            <person name="Nagahari K."/>
            <person name="Murakami K."/>
            <person name="Yasuda T."/>
            <person name="Iwayanagi T."/>
            <person name="Wagatsuma M."/>
            <person name="Shiratori A."/>
            <person name="Sudo H."/>
            <person name="Hosoiri T."/>
            <person name="Kaku Y."/>
            <person name="Kodaira H."/>
            <person name="Kondo H."/>
            <person name="Sugawara M."/>
            <person name="Takahashi M."/>
            <person name="Kanda K."/>
            <person name="Yokoi T."/>
            <person name="Furuya T."/>
            <person name="Kikkawa E."/>
            <person name="Omura Y."/>
            <person name="Abe K."/>
            <person name="Kamihara K."/>
            <person name="Katsuta N."/>
            <person name="Sato K."/>
            <person name="Tanikawa M."/>
            <person name="Yamazaki M."/>
            <person name="Ninomiya K."/>
            <person name="Ishibashi T."/>
            <person name="Yamashita H."/>
            <person name="Murakawa K."/>
            <person name="Fujimori K."/>
            <person name="Tanai H."/>
            <person name="Kimata M."/>
            <person name="Watanabe M."/>
            <person name="Hiraoka S."/>
            <person name="Chiba Y."/>
            <person name="Ishida S."/>
            <person name="Ono Y."/>
            <person name="Takiguchi S."/>
            <person name="Watanabe S."/>
            <person name="Yosida M."/>
            <person name="Hotuta T."/>
            <person name="Kusano J."/>
            <person name="Kanehori K."/>
            <person name="Takahashi-Fujii A."/>
            <person name="Hara H."/>
            <person name="Tanase T.-O."/>
            <person name="Nomura Y."/>
            <person name="Togiya S."/>
            <person name="Komai F."/>
            <person name="Hara R."/>
            <person name="Takeuchi K."/>
            <person name="Arita M."/>
            <person name="Imose N."/>
            <person name="Musashino K."/>
            <person name="Yuuki H."/>
            <person name="Oshima A."/>
            <person name="Sasaki N."/>
            <person name="Aotsuka S."/>
            <person name="Yoshikawa Y."/>
            <person name="Matsunawa H."/>
            <person name="Ichihara T."/>
            <person name="Shiohata N."/>
            <person name="Sano S."/>
            <person name="Moriya S."/>
            <person name="Momiyama H."/>
            <person name="Satoh N."/>
            <person name="Takami S."/>
            <person name="Terashima Y."/>
            <person name="Suzuki O."/>
            <person name="Nakagawa S."/>
            <person name="Senoh A."/>
            <person name="Mizoguchi H."/>
            <person name="Goto Y."/>
            <person name="Shimizu F."/>
            <person name="Wakebe H."/>
            <person name="Hishigaki H."/>
            <person name="Watanabe T."/>
            <person name="Sugiyama A."/>
            <person name="Takemoto M."/>
            <person name="Kawakami B."/>
            <person name="Yamazaki M."/>
            <person name="Watanabe K."/>
            <person name="Kumagai A."/>
            <person name="Itakura S."/>
            <person name="Fukuzumi Y."/>
            <person name="Fujimori Y."/>
            <person name="Komiyama M."/>
            <person name="Tashiro H."/>
            <person name="Tanigami A."/>
            <person name="Fujiwara T."/>
            <person name="Ono T."/>
            <person name="Yamada K."/>
            <person name="Fujii Y."/>
            <person name="Ozaki K."/>
            <person name="Hirao M."/>
            <person name="Ohmori Y."/>
            <person name="Kawabata A."/>
            <person name="Hikiji T."/>
            <person name="Kobatake N."/>
            <person name="Inagaki H."/>
            <person name="Ikema Y."/>
            <person name="Okamoto S."/>
            <person name="Okitani R."/>
            <person name="Kawakami T."/>
            <person name="Noguchi S."/>
            <person name="Itoh T."/>
            <person name="Shigeta K."/>
            <person name="Senba T."/>
            <person name="Matsumura K."/>
            <person name="Nakajima Y."/>
            <person name="Mizuno T."/>
            <person name="Morinaga M."/>
            <person name="Sasaki M."/>
            <person name="Togashi T."/>
            <person name="Oyama M."/>
            <person name="Hata H."/>
            <person name="Watanabe M."/>
            <person name="Komatsu T."/>
            <person name="Mizushima-Sugano J."/>
            <person name="Satoh T."/>
            <person name="Shirai Y."/>
            <person name="Takahashi Y."/>
            <person name="Nakagawa K."/>
            <person name="Okumura K."/>
            <person name="Nagase T."/>
            <person name="Nomura N."/>
            <person name="Kikuchi H."/>
            <person name="Masuho Y."/>
            <person name="Yamashita R."/>
            <person name="Nakai K."/>
            <person name="Yada T."/>
            <person name="Nakamura Y."/>
            <person name="Ohara O."/>
            <person name="Isogai T."/>
            <person name="Sugano S."/>
        </authorList>
    </citation>
    <scope>NUCLEOTIDE SEQUENCE [LARGE SCALE MRNA]</scope>
    <source>
        <tissue>Placenta</tissue>
    </source>
</reference>
<reference key="2">
    <citation type="journal article" date="2001" name="Nature">
        <title>The DNA sequence and comparative analysis of human chromosome 20.</title>
        <authorList>
            <person name="Deloukas P."/>
            <person name="Matthews L.H."/>
            <person name="Ashurst J.L."/>
            <person name="Burton J."/>
            <person name="Gilbert J.G.R."/>
            <person name="Jones M."/>
            <person name="Stavrides G."/>
            <person name="Almeida J.P."/>
            <person name="Babbage A.K."/>
            <person name="Bagguley C.L."/>
            <person name="Bailey J."/>
            <person name="Barlow K.F."/>
            <person name="Bates K.N."/>
            <person name="Beard L.M."/>
            <person name="Beare D.M."/>
            <person name="Beasley O.P."/>
            <person name="Bird C.P."/>
            <person name="Blakey S.E."/>
            <person name="Bridgeman A.M."/>
            <person name="Brown A.J."/>
            <person name="Buck D."/>
            <person name="Burrill W.D."/>
            <person name="Butler A.P."/>
            <person name="Carder C."/>
            <person name="Carter N.P."/>
            <person name="Chapman J.C."/>
            <person name="Clamp M."/>
            <person name="Clark G."/>
            <person name="Clark L.N."/>
            <person name="Clark S.Y."/>
            <person name="Clee C.M."/>
            <person name="Clegg S."/>
            <person name="Cobley V.E."/>
            <person name="Collier R.E."/>
            <person name="Connor R.E."/>
            <person name="Corby N.R."/>
            <person name="Coulson A."/>
            <person name="Coville G.J."/>
            <person name="Deadman R."/>
            <person name="Dhami P.D."/>
            <person name="Dunn M."/>
            <person name="Ellington A.G."/>
            <person name="Frankland J.A."/>
            <person name="Fraser A."/>
            <person name="French L."/>
            <person name="Garner P."/>
            <person name="Grafham D.V."/>
            <person name="Griffiths C."/>
            <person name="Griffiths M.N.D."/>
            <person name="Gwilliam R."/>
            <person name="Hall R.E."/>
            <person name="Hammond S."/>
            <person name="Harley J.L."/>
            <person name="Heath P.D."/>
            <person name="Ho S."/>
            <person name="Holden J.L."/>
            <person name="Howden P.J."/>
            <person name="Huckle E."/>
            <person name="Hunt A.R."/>
            <person name="Hunt S.E."/>
            <person name="Jekosch K."/>
            <person name="Johnson C.M."/>
            <person name="Johnson D."/>
            <person name="Kay M.P."/>
            <person name="Kimberley A.M."/>
            <person name="King A."/>
            <person name="Knights A."/>
            <person name="Laird G.K."/>
            <person name="Lawlor S."/>
            <person name="Lehvaeslaiho M.H."/>
            <person name="Leversha M.A."/>
            <person name="Lloyd C."/>
            <person name="Lloyd D.M."/>
            <person name="Lovell J.D."/>
            <person name="Marsh V.L."/>
            <person name="Martin S.L."/>
            <person name="McConnachie L.J."/>
            <person name="McLay K."/>
            <person name="McMurray A.A."/>
            <person name="Milne S.A."/>
            <person name="Mistry D."/>
            <person name="Moore M.J.F."/>
            <person name="Mullikin J.C."/>
            <person name="Nickerson T."/>
            <person name="Oliver K."/>
            <person name="Parker A."/>
            <person name="Patel R."/>
            <person name="Pearce T.A.V."/>
            <person name="Peck A.I."/>
            <person name="Phillimore B.J.C.T."/>
            <person name="Prathalingam S.R."/>
            <person name="Plumb R.W."/>
            <person name="Ramsay H."/>
            <person name="Rice C.M."/>
            <person name="Ross M.T."/>
            <person name="Scott C.E."/>
            <person name="Sehra H.K."/>
            <person name="Shownkeen R."/>
            <person name="Sims S."/>
            <person name="Skuce C.D."/>
            <person name="Smith M.L."/>
            <person name="Soderlund C."/>
            <person name="Steward C.A."/>
            <person name="Sulston J.E."/>
            <person name="Swann R.M."/>
            <person name="Sycamore N."/>
            <person name="Taylor R."/>
            <person name="Tee L."/>
            <person name="Thomas D.W."/>
            <person name="Thorpe A."/>
            <person name="Tracey A."/>
            <person name="Tromans A.C."/>
            <person name="Vaudin M."/>
            <person name="Wall M."/>
            <person name="Wallis J.M."/>
            <person name="Whitehead S.L."/>
            <person name="Whittaker P."/>
            <person name="Willey D.L."/>
            <person name="Williams L."/>
            <person name="Williams S.A."/>
            <person name="Wilming L."/>
            <person name="Wray P.W."/>
            <person name="Hubbard T."/>
            <person name="Durbin R.M."/>
            <person name="Bentley D.R."/>
            <person name="Beck S."/>
            <person name="Rogers J."/>
        </authorList>
    </citation>
    <scope>NUCLEOTIDE SEQUENCE [LARGE SCALE GENOMIC DNA]</scope>
</reference>
<reference key="3">
    <citation type="submission" date="2005-09" db="EMBL/GenBank/DDBJ databases">
        <authorList>
            <person name="Mural R.J."/>
            <person name="Istrail S."/>
            <person name="Sutton G.G."/>
            <person name="Florea L."/>
            <person name="Halpern A.L."/>
            <person name="Mobarry C.M."/>
            <person name="Lippert R."/>
            <person name="Walenz B."/>
            <person name="Shatkay H."/>
            <person name="Dew I."/>
            <person name="Miller J.R."/>
            <person name="Flanigan M.J."/>
            <person name="Edwards N.J."/>
            <person name="Bolanos R."/>
            <person name="Fasulo D."/>
            <person name="Halldorsson B.V."/>
            <person name="Hannenhalli S."/>
            <person name="Turner R."/>
            <person name="Yooseph S."/>
            <person name="Lu F."/>
            <person name="Nusskern D.R."/>
            <person name="Shue B.C."/>
            <person name="Zheng X.H."/>
            <person name="Zhong F."/>
            <person name="Delcher A.L."/>
            <person name="Huson D.H."/>
            <person name="Kravitz S.A."/>
            <person name="Mouchard L."/>
            <person name="Reinert K."/>
            <person name="Remington K.A."/>
            <person name="Clark A.G."/>
            <person name="Waterman M.S."/>
            <person name="Eichler E.E."/>
            <person name="Adams M.D."/>
            <person name="Hunkapiller M.W."/>
            <person name="Myers E.W."/>
            <person name="Venter J.C."/>
        </authorList>
    </citation>
    <scope>NUCLEOTIDE SEQUENCE [LARGE SCALE GENOMIC DNA]</scope>
</reference>
<evidence type="ECO:0000255" key="1"/>
<evidence type="ECO:0000256" key="2">
    <source>
        <dbReference type="SAM" id="MobiDB-lite"/>
    </source>
</evidence>
<evidence type="ECO:0000305" key="3"/>
<proteinExistence type="evidence at protein level"/>